<dbReference type="EMBL" id="AM408590">
    <property type="protein sequence ID" value="CAL71358.1"/>
    <property type="molecule type" value="Genomic_DNA"/>
</dbReference>
<dbReference type="RefSeq" id="WP_003406708.1">
    <property type="nucleotide sequence ID" value="NC_008769.1"/>
</dbReference>
<dbReference type="BMRB" id="A1KI99"/>
<dbReference type="SMR" id="A1KI99"/>
<dbReference type="KEGG" id="mbb:BCG_1371"/>
<dbReference type="HOGENOM" id="CLU_084338_4_0_11"/>
<dbReference type="Proteomes" id="UP000001472">
    <property type="component" value="Chromosome"/>
</dbReference>
<dbReference type="GO" id="GO:0005886">
    <property type="term" value="C:plasma membrane"/>
    <property type="evidence" value="ECO:0007669"/>
    <property type="project" value="UniProtKB-SubCell"/>
</dbReference>
<dbReference type="GO" id="GO:0045259">
    <property type="term" value="C:proton-transporting ATP synthase complex"/>
    <property type="evidence" value="ECO:0007669"/>
    <property type="project" value="UniProtKB-KW"/>
</dbReference>
<dbReference type="GO" id="GO:0005524">
    <property type="term" value="F:ATP binding"/>
    <property type="evidence" value="ECO:0007669"/>
    <property type="project" value="UniProtKB-UniRule"/>
</dbReference>
<dbReference type="GO" id="GO:0046933">
    <property type="term" value="F:proton-transporting ATP synthase activity, rotational mechanism"/>
    <property type="evidence" value="ECO:0007669"/>
    <property type="project" value="UniProtKB-UniRule"/>
</dbReference>
<dbReference type="CDD" id="cd12152">
    <property type="entry name" value="F1-ATPase_delta"/>
    <property type="match status" value="1"/>
</dbReference>
<dbReference type="FunFam" id="2.60.15.10:FF:000011">
    <property type="entry name" value="ATP synthase epsilon chain"/>
    <property type="match status" value="1"/>
</dbReference>
<dbReference type="Gene3D" id="2.60.15.10">
    <property type="entry name" value="F0F1 ATP synthase delta/epsilon subunit, N-terminal"/>
    <property type="match status" value="1"/>
</dbReference>
<dbReference type="HAMAP" id="MF_00530">
    <property type="entry name" value="ATP_synth_epsil_bac"/>
    <property type="match status" value="1"/>
</dbReference>
<dbReference type="InterPro" id="IPR001469">
    <property type="entry name" value="ATP_synth_F1_dsu/esu"/>
</dbReference>
<dbReference type="InterPro" id="IPR020546">
    <property type="entry name" value="ATP_synth_F1_dsu/esu_N"/>
</dbReference>
<dbReference type="InterPro" id="IPR036771">
    <property type="entry name" value="ATPsynth_dsu/esu_N"/>
</dbReference>
<dbReference type="NCBIfam" id="TIGR01216">
    <property type="entry name" value="ATP_synt_epsi"/>
    <property type="match status" value="1"/>
</dbReference>
<dbReference type="NCBIfam" id="NF009977">
    <property type="entry name" value="PRK13442.1"/>
    <property type="match status" value="1"/>
</dbReference>
<dbReference type="PANTHER" id="PTHR13822">
    <property type="entry name" value="ATP SYNTHASE DELTA/EPSILON CHAIN"/>
    <property type="match status" value="1"/>
</dbReference>
<dbReference type="PANTHER" id="PTHR13822:SF10">
    <property type="entry name" value="ATP SYNTHASE EPSILON CHAIN, CHLOROPLASTIC"/>
    <property type="match status" value="1"/>
</dbReference>
<dbReference type="Pfam" id="PF02823">
    <property type="entry name" value="ATP-synt_DE_N"/>
    <property type="match status" value="1"/>
</dbReference>
<dbReference type="SUPFAM" id="SSF51344">
    <property type="entry name" value="Epsilon subunit of F1F0-ATP synthase N-terminal domain"/>
    <property type="match status" value="1"/>
</dbReference>
<accession>A1KI99</accession>
<sequence length="121" mass="13135">MAELNVEIVAVDRNIWSGTAKFLFTRTTVGEIGILPRHIPLVAQLVDDAMVRVEREGEKDLRIAVDGGFLSVTEEGVSILAESAEFESEIDEAAAKQDSESDDPRIAARGRARLRAVGAID</sequence>
<organism>
    <name type="scientific">Mycobacterium bovis (strain BCG / Pasteur 1173P2)</name>
    <dbReference type="NCBI Taxonomy" id="410289"/>
    <lineage>
        <taxon>Bacteria</taxon>
        <taxon>Bacillati</taxon>
        <taxon>Actinomycetota</taxon>
        <taxon>Actinomycetes</taxon>
        <taxon>Mycobacteriales</taxon>
        <taxon>Mycobacteriaceae</taxon>
        <taxon>Mycobacterium</taxon>
        <taxon>Mycobacterium tuberculosis complex</taxon>
    </lineage>
</organism>
<evidence type="ECO:0000255" key="1">
    <source>
        <dbReference type="HAMAP-Rule" id="MF_00530"/>
    </source>
</evidence>
<reference key="1">
    <citation type="journal article" date="2007" name="Proc. Natl. Acad. Sci. U.S.A.">
        <title>Genome plasticity of BCG and impact on vaccine efficacy.</title>
        <authorList>
            <person name="Brosch R."/>
            <person name="Gordon S.V."/>
            <person name="Garnier T."/>
            <person name="Eiglmeier K."/>
            <person name="Frigui W."/>
            <person name="Valenti P."/>
            <person name="Dos Santos S."/>
            <person name="Duthoy S."/>
            <person name="Lacroix C."/>
            <person name="Garcia-Pelayo C."/>
            <person name="Inwald J.K."/>
            <person name="Golby P."/>
            <person name="Garcia J.N."/>
            <person name="Hewinson R.G."/>
            <person name="Behr M.A."/>
            <person name="Quail M.A."/>
            <person name="Churcher C."/>
            <person name="Barrell B.G."/>
            <person name="Parkhill J."/>
            <person name="Cole S.T."/>
        </authorList>
    </citation>
    <scope>NUCLEOTIDE SEQUENCE [LARGE SCALE GENOMIC DNA]</scope>
    <source>
        <strain>BCG / Pasteur 1173P2</strain>
    </source>
</reference>
<feature type="chain" id="PRO_1000056505" description="ATP synthase epsilon chain">
    <location>
        <begin position="1"/>
        <end position="121"/>
    </location>
</feature>
<protein>
    <recommendedName>
        <fullName evidence="1">ATP synthase epsilon chain</fullName>
    </recommendedName>
    <alternativeName>
        <fullName evidence="1">ATP synthase F1 sector epsilon subunit</fullName>
    </alternativeName>
    <alternativeName>
        <fullName evidence="1">F-ATPase epsilon subunit</fullName>
    </alternativeName>
</protein>
<comment type="function">
    <text evidence="1">Produces ATP from ADP in the presence of a proton gradient across the membrane.</text>
</comment>
<comment type="subunit">
    <text evidence="1">F-type ATPases have 2 components, CF(1) - the catalytic core - and CF(0) - the membrane proton channel. CF(1) has five subunits: alpha(3), beta(3), gamma(1), delta(1), epsilon(1). CF(0) has three main subunits: a, b and c.</text>
</comment>
<comment type="subcellular location">
    <subcellularLocation>
        <location evidence="1">Cell membrane</location>
        <topology evidence="1">Peripheral membrane protein</topology>
    </subcellularLocation>
</comment>
<comment type="similarity">
    <text evidence="1">Belongs to the ATPase epsilon chain family.</text>
</comment>
<gene>
    <name evidence="1" type="primary">atpC</name>
    <name type="ordered locus">BCG_1371</name>
</gene>
<name>ATPE_MYCBP</name>
<keyword id="KW-0066">ATP synthesis</keyword>
<keyword id="KW-1003">Cell membrane</keyword>
<keyword id="KW-0139">CF(1)</keyword>
<keyword id="KW-0375">Hydrogen ion transport</keyword>
<keyword id="KW-0406">Ion transport</keyword>
<keyword id="KW-0472">Membrane</keyword>
<keyword id="KW-0813">Transport</keyword>
<proteinExistence type="inferred from homology"/>